<gene>
    <name type="primary">LY6H</name>
    <name type="ORF">QccE-13216</name>
</gene>
<reference key="1">
    <citation type="submission" date="2005-06" db="EMBL/GenBank/DDBJ databases">
        <title>DNA sequences of macaque genes expressed in brain or testis and its evolutionary implications.</title>
        <authorList>
            <consortium name="International consortium for macaque cDNA sequencing and analysis"/>
        </authorList>
    </citation>
    <scope>NUCLEOTIDE SEQUENCE [LARGE SCALE MRNA]</scope>
    <source>
        <tissue>Brain cortex</tissue>
    </source>
</reference>
<protein>
    <recommendedName>
        <fullName>Lymphocyte antigen 6H</fullName>
        <shortName>Ly-6H</shortName>
    </recommendedName>
</protein>
<organism>
    <name type="scientific">Macaca fascicularis</name>
    <name type="common">Crab-eating macaque</name>
    <name type="synonym">Cynomolgus monkey</name>
    <dbReference type="NCBI Taxonomy" id="9541"/>
    <lineage>
        <taxon>Eukaryota</taxon>
        <taxon>Metazoa</taxon>
        <taxon>Chordata</taxon>
        <taxon>Craniata</taxon>
        <taxon>Vertebrata</taxon>
        <taxon>Euteleostomi</taxon>
        <taxon>Mammalia</taxon>
        <taxon>Eutheria</taxon>
        <taxon>Euarchontoglires</taxon>
        <taxon>Primates</taxon>
        <taxon>Haplorrhini</taxon>
        <taxon>Catarrhini</taxon>
        <taxon>Cercopithecidae</taxon>
        <taxon>Cercopithecinae</taxon>
        <taxon>Macaca</taxon>
    </lineage>
</organism>
<feature type="signal peptide" evidence="6">
    <location>
        <begin position="1"/>
        <end position="25"/>
    </location>
</feature>
<feature type="chain" id="PRO_0000318206" description="Lymphocyte antigen 6H">
    <location>
        <begin position="26"/>
        <end position="115"/>
    </location>
</feature>
<feature type="propeptide" id="PRO_0000318207" description="Removed in mature form" evidence="6">
    <location>
        <begin position="116"/>
        <end position="140"/>
    </location>
</feature>
<feature type="domain" description="UPAR/Ly6">
    <location>
        <begin position="26"/>
        <end position="91"/>
    </location>
</feature>
<feature type="lipid moiety-binding region" description="GPI-anchor amidated glycine" evidence="6">
    <location>
        <position position="115"/>
    </location>
</feature>
<feature type="glycosylation site" description="N-linked (GlcNAc...) asparagine" evidence="6">
    <location>
        <position position="36"/>
    </location>
</feature>
<feature type="disulfide bond" evidence="3 4">
    <location>
        <begin position="28"/>
        <end position="52"/>
    </location>
</feature>
<feature type="disulfide bond" evidence="3 4">
    <location>
        <begin position="31"/>
        <end position="40"/>
    </location>
</feature>
<feature type="disulfide bond" evidence="3 4">
    <location>
        <begin position="45"/>
        <end position="73"/>
    </location>
</feature>
<feature type="disulfide bond" evidence="3 4">
    <location>
        <begin position="77"/>
        <end position="104"/>
    </location>
</feature>
<proteinExistence type="evidence at transcript level"/>
<sequence length="140" mass="14757">MLPAAMKGLGLALLAVLLCSAPAHGLWCQDCTLTTNSSHCTPKQCQPSDTVCASVRITDPSSSRKDHSVNKMCASSCDFVKRHFFSDYLMGFINSGILKVDVDCYEKDLCNGVAGAGHSPWALAGGLLLSLGPALLWAGP</sequence>
<accession>Q4R5M8</accession>
<evidence type="ECO:0000250" key="1"/>
<evidence type="ECO:0000250" key="2">
    <source>
        <dbReference type="UniProtKB" id="F1LNW6"/>
    </source>
</evidence>
<evidence type="ECO:0000250" key="3">
    <source>
        <dbReference type="UniProtKB" id="P0DP57"/>
    </source>
</evidence>
<evidence type="ECO:0000250" key="4">
    <source>
        <dbReference type="UniProtKB" id="P0DP58"/>
    </source>
</evidence>
<evidence type="ECO:0000250" key="5">
    <source>
        <dbReference type="UniProtKB" id="Q9WUC3"/>
    </source>
</evidence>
<evidence type="ECO:0000255" key="6"/>
<evidence type="ECO:0000305" key="7"/>
<comment type="function">
    <text evidence="2 5">Believed to act as a modulator of nicotinic acetylcholine receptors (nAChRs) activity. In vitro inhibits alpha-3:beta-4-containing nAChRs maximum response. May play a role in the intracellular trafficking of alpha-7-containing nAChRs and may inhibit their expression at the cell surface. Seems to inhibit alpha-7/CHRNA7 signaling in hippocampal neurons (By similarity).</text>
</comment>
<comment type="subunit">
    <text evidence="5">Interacts with CHRNA4 and CHRNA7.</text>
</comment>
<comment type="subcellular location">
    <subcellularLocation>
        <location evidence="1">Cell membrane</location>
        <topology evidence="1">Lipid-anchor</topology>
        <topology evidence="1">GPI-anchor</topology>
    </subcellularLocation>
</comment>
<comment type="caution">
    <text evidence="7">It is uncertain whether Met-1 or Met-6 is the initiator.</text>
</comment>
<name>LY6H_MACFA</name>
<dbReference type="EMBL" id="AB169515">
    <property type="protein sequence ID" value="BAE01597.1"/>
    <property type="molecule type" value="mRNA"/>
</dbReference>
<dbReference type="RefSeq" id="NP_001272213.1">
    <property type="nucleotide sequence ID" value="NM_001285284.1"/>
</dbReference>
<dbReference type="STRING" id="9541.ENSMFAP00000039290"/>
<dbReference type="GlyCosmos" id="Q4R5M8">
    <property type="glycosylation" value="1 site, No reported glycans"/>
</dbReference>
<dbReference type="eggNOG" id="ENOG502RVP9">
    <property type="taxonomic scope" value="Eukaryota"/>
</dbReference>
<dbReference type="Proteomes" id="UP000233100">
    <property type="component" value="Unplaced"/>
</dbReference>
<dbReference type="GO" id="GO:0005886">
    <property type="term" value="C:plasma membrane"/>
    <property type="evidence" value="ECO:0007669"/>
    <property type="project" value="UniProtKB-SubCell"/>
</dbReference>
<dbReference type="GO" id="GO:0098552">
    <property type="term" value="C:side of membrane"/>
    <property type="evidence" value="ECO:0007669"/>
    <property type="project" value="UniProtKB-KW"/>
</dbReference>
<dbReference type="GO" id="GO:0045202">
    <property type="term" value="C:synapse"/>
    <property type="evidence" value="ECO:0007669"/>
    <property type="project" value="GOC"/>
</dbReference>
<dbReference type="GO" id="GO:0033130">
    <property type="term" value="F:acetylcholine receptor binding"/>
    <property type="evidence" value="ECO:0007669"/>
    <property type="project" value="TreeGrafter"/>
</dbReference>
<dbReference type="GO" id="GO:0030550">
    <property type="term" value="F:acetylcholine receptor inhibitor activity"/>
    <property type="evidence" value="ECO:0007669"/>
    <property type="project" value="TreeGrafter"/>
</dbReference>
<dbReference type="GO" id="GO:0095500">
    <property type="term" value="P:acetylcholine receptor signaling pathway"/>
    <property type="evidence" value="ECO:0007669"/>
    <property type="project" value="TreeGrafter"/>
</dbReference>
<dbReference type="CDD" id="cd23549">
    <property type="entry name" value="TFP_LU_ECD_Ly6H"/>
    <property type="match status" value="1"/>
</dbReference>
<dbReference type="FunFam" id="2.10.60.10:FF:000011">
    <property type="entry name" value="lymphocyte antigen 6H isoform X1"/>
    <property type="match status" value="1"/>
</dbReference>
<dbReference type="Gene3D" id="2.10.60.10">
    <property type="entry name" value="CD59"/>
    <property type="match status" value="1"/>
</dbReference>
<dbReference type="InterPro" id="IPR016054">
    <property type="entry name" value="LY6_UPA_recep-like"/>
</dbReference>
<dbReference type="InterPro" id="IPR051445">
    <property type="entry name" value="LY6H/LY6L_nAChR_modulators"/>
</dbReference>
<dbReference type="InterPro" id="IPR045860">
    <property type="entry name" value="Snake_toxin-like_sf"/>
</dbReference>
<dbReference type="PANTHER" id="PTHR32217">
    <property type="entry name" value="LYMPHOCYTE ANTIGEN 6H"/>
    <property type="match status" value="1"/>
</dbReference>
<dbReference type="PANTHER" id="PTHR32217:SF5">
    <property type="entry name" value="LYMPHOCYTE ANTIGEN 6H"/>
    <property type="match status" value="1"/>
</dbReference>
<dbReference type="Pfam" id="PF00021">
    <property type="entry name" value="UPAR_LY6"/>
    <property type="match status" value="1"/>
</dbReference>
<dbReference type="SMART" id="SM00134">
    <property type="entry name" value="LU"/>
    <property type="match status" value="1"/>
</dbReference>
<dbReference type="SUPFAM" id="SSF57302">
    <property type="entry name" value="Snake toxin-like"/>
    <property type="match status" value="1"/>
</dbReference>
<keyword id="KW-1003">Cell membrane</keyword>
<keyword id="KW-1015">Disulfide bond</keyword>
<keyword id="KW-0325">Glycoprotein</keyword>
<keyword id="KW-0336">GPI-anchor</keyword>
<keyword id="KW-0449">Lipoprotein</keyword>
<keyword id="KW-0472">Membrane</keyword>
<keyword id="KW-1185">Reference proteome</keyword>
<keyword id="KW-0732">Signal</keyword>